<accession>Q45657</accession>
<proteinExistence type="evidence at protein level"/>
<reference key="1">
    <citation type="journal article" date="1996" name="J. Biol. Chem.">
        <title>Bacillus stearothermophilus qcr operon encoding Rieske FeS protein, cytochrome b6, and a novel-type cytochrome c1 of quinol-cytochrome c reductase.</title>
        <authorList>
            <person name="Sone N."/>
            <person name="Tsuchiya N."/>
            <person name="Inoue M."/>
            <person name="Noguchi S."/>
        </authorList>
    </citation>
    <scope>NUCLEOTIDE SEQUENCE [GENOMIC DNA]</scope>
    <scope>FUNCTION</scope>
    <scope>SUBUNIT</scope>
    <source>
        <strain>K1041</strain>
    </source>
</reference>
<dbReference type="EMBL" id="D83789">
    <property type="protein sequence ID" value="BAA12116.1"/>
    <property type="molecule type" value="Genomic_DNA"/>
</dbReference>
<dbReference type="RefSeq" id="WP_008879600.1">
    <property type="nucleotide sequence ID" value="NZ_PJQR01000003.1"/>
</dbReference>
<dbReference type="SMR" id="Q45657"/>
<dbReference type="STRING" id="33940.GTHT12_01704"/>
<dbReference type="GeneID" id="87623774"/>
<dbReference type="GO" id="GO:0051537">
    <property type="term" value="F:2 iron, 2 sulfur cluster binding"/>
    <property type="evidence" value="ECO:0007669"/>
    <property type="project" value="UniProtKB-KW"/>
</dbReference>
<dbReference type="GO" id="GO:0046872">
    <property type="term" value="F:metal ion binding"/>
    <property type="evidence" value="ECO:0007669"/>
    <property type="project" value="UniProtKB-KW"/>
</dbReference>
<dbReference type="GO" id="GO:0004497">
    <property type="term" value="F:monooxygenase activity"/>
    <property type="evidence" value="ECO:0007669"/>
    <property type="project" value="UniProtKB-ARBA"/>
</dbReference>
<dbReference type="GO" id="GO:0016705">
    <property type="term" value="F:oxidoreductase activity, acting on paired donors, with incorporation or reduction of molecular oxygen"/>
    <property type="evidence" value="ECO:0007669"/>
    <property type="project" value="UniProtKB-ARBA"/>
</dbReference>
<dbReference type="CDD" id="cd03467">
    <property type="entry name" value="Rieske"/>
    <property type="match status" value="1"/>
</dbReference>
<dbReference type="FunFam" id="2.102.10.10:FF:000006">
    <property type="entry name" value="Menaquinol-cytochrome c reductase, iron-sulfur subunit"/>
    <property type="match status" value="1"/>
</dbReference>
<dbReference type="Gene3D" id="2.102.10.10">
    <property type="entry name" value="Rieske [2Fe-2S] iron-sulphur domain"/>
    <property type="match status" value="1"/>
</dbReference>
<dbReference type="InterPro" id="IPR017941">
    <property type="entry name" value="Rieske_2Fe-2S"/>
</dbReference>
<dbReference type="InterPro" id="IPR036922">
    <property type="entry name" value="Rieske_2Fe-2S_sf"/>
</dbReference>
<dbReference type="InterPro" id="IPR014349">
    <property type="entry name" value="Rieske_Fe-S_prot"/>
</dbReference>
<dbReference type="InterPro" id="IPR006311">
    <property type="entry name" value="TAT_signal"/>
</dbReference>
<dbReference type="PANTHER" id="PTHR10134">
    <property type="entry name" value="CYTOCHROME B-C1 COMPLEX SUBUNIT RIESKE, MITOCHONDRIAL"/>
    <property type="match status" value="1"/>
</dbReference>
<dbReference type="Pfam" id="PF00355">
    <property type="entry name" value="Rieske"/>
    <property type="match status" value="1"/>
</dbReference>
<dbReference type="SUPFAM" id="SSF50022">
    <property type="entry name" value="ISP domain"/>
    <property type="match status" value="1"/>
</dbReference>
<dbReference type="PROSITE" id="PS51296">
    <property type="entry name" value="RIESKE"/>
    <property type="match status" value="1"/>
</dbReference>
<dbReference type="PROSITE" id="PS51318">
    <property type="entry name" value="TAT"/>
    <property type="match status" value="1"/>
</dbReference>
<comment type="function">
    <text evidence="3">Component of the menaquinol:cytochrome c reductase complex. The Rieske protein is a high potential 2Fe-2S protein.</text>
</comment>
<comment type="cofactor">
    <cofactor evidence="1">
        <name>[2Fe-2S] cluster</name>
        <dbReference type="ChEBI" id="CHEBI:190135"/>
    </cofactor>
    <text evidence="1">Binds 1 [2Fe-2S] cluster per subunit.</text>
</comment>
<comment type="subunit">
    <text evidence="3">The main subunits of the menaquinol:cytochrome c complex are a Rieske-type iron-sulfur protein (QcrA), a cytochrome b (QcrB) and a cytochrome c (QcrC).</text>
</comment>
<comment type="similarity">
    <text evidence="2">Belongs to the Rieske iron-sulfur protein family.</text>
</comment>
<gene>
    <name type="primary">qcrA</name>
</gene>
<name>QCRA_GEOTD</name>
<protein>
    <recommendedName>
        <fullName>Menaquinol:cytochrome c reductase iron-sulfur subunit</fullName>
    </recommendedName>
    <alternativeName>
        <fullName>Cytochrome bc complex, iron-sulfur subunit</fullName>
    </alternativeName>
    <alternativeName>
        <fullName>Rieske iron-sulfur protein QcrA</fullName>
    </alternativeName>
</protein>
<sequence>MSDNKHRVTRRQFLNYTLTGVGGFMAAGMLMPMLRFAFDPILRETAGTDMVAVADVKEITTEPKRFDFKVKVKDAWYESEEPRSAWVYKDEKGDIIALSPVCKHLGCTVDWNTDKNNPNHFFCPCHYGLYTKDGTNVPGTPPTAPLDRYEFEVKDGKLYLGKAKPRGEA</sequence>
<evidence type="ECO:0000255" key="1">
    <source>
        <dbReference type="PROSITE-ProRule" id="PRU00628"/>
    </source>
</evidence>
<evidence type="ECO:0000305" key="2"/>
<evidence type="ECO:0000305" key="3">
    <source>
    </source>
</evidence>
<keyword id="KW-0001">2Fe-2S</keyword>
<keyword id="KW-1015">Disulfide bond</keyword>
<keyword id="KW-0249">Electron transport</keyword>
<keyword id="KW-0408">Iron</keyword>
<keyword id="KW-0411">Iron-sulfur</keyword>
<keyword id="KW-0479">Metal-binding</keyword>
<keyword id="KW-0560">Oxidoreductase</keyword>
<keyword id="KW-0813">Transport</keyword>
<organism>
    <name type="scientific">Geobacillus thermodenitrificans</name>
    <dbReference type="NCBI Taxonomy" id="33940"/>
    <lineage>
        <taxon>Bacteria</taxon>
        <taxon>Bacillati</taxon>
        <taxon>Bacillota</taxon>
        <taxon>Bacilli</taxon>
        <taxon>Bacillales</taxon>
        <taxon>Anoxybacillaceae</taxon>
        <taxon>Geobacillus</taxon>
    </lineage>
</organism>
<feature type="chain" id="PRO_0000127787" description="Menaquinol:cytochrome c reductase iron-sulfur subunit">
    <location>
        <begin position="1"/>
        <end position="169"/>
    </location>
</feature>
<feature type="domain" description="Rieske" evidence="1">
    <location>
        <begin position="62"/>
        <end position="160"/>
    </location>
</feature>
<feature type="binding site" evidence="1">
    <location>
        <position position="102"/>
    </location>
    <ligand>
        <name>[2Fe-2S] cluster</name>
        <dbReference type="ChEBI" id="CHEBI:190135"/>
    </ligand>
</feature>
<feature type="binding site" evidence="1">
    <location>
        <position position="104"/>
    </location>
    <ligand>
        <name>[2Fe-2S] cluster</name>
        <dbReference type="ChEBI" id="CHEBI:190135"/>
    </ligand>
</feature>
<feature type="binding site" evidence="1">
    <location>
        <position position="123"/>
    </location>
    <ligand>
        <name>[2Fe-2S] cluster</name>
        <dbReference type="ChEBI" id="CHEBI:190135"/>
    </ligand>
</feature>
<feature type="binding site" evidence="1">
    <location>
        <position position="126"/>
    </location>
    <ligand>
        <name>[2Fe-2S] cluster</name>
        <dbReference type="ChEBI" id="CHEBI:190135"/>
    </ligand>
</feature>
<feature type="disulfide bond" evidence="1">
    <location>
        <begin position="107"/>
        <end position="125"/>
    </location>
</feature>